<keyword id="KW-0217">Developmental protein</keyword>
<keyword id="KW-0238">DNA-binding</keyword>
<keyword id="KW-0371">Homeobox</keyword>
<keyword id="KW-0539">Nucleus</keyword>
<keyword id="KW-1185">Reference proteome</keyword>
<keyword id="KW-0804">Transcription</keyword>
<keyword id="KW-0805">Transcription regulation</keyword>
<sequence length="105" mass="12552">LGPDGKRGRQTYTRYQTLELEKEFHFNRYLTRRRAVEIAHALCLTERQIKIWFQNRRMKWKKEHKDESQAPTAVPEDAVPSVSTAADKADEEEEEEEEEEEEEEE</sequence>
<gene>
    <name type="primary">Hoxa7</name>
    <name type="synonym">Hoxa-7</name>
</gene>
<organism>
    <name type="scientific">Rattus norvegicus</name>
    <name type="common">Rat</name>
    <dbReference type="NCBI Taxonomy" id="10116"/>
    <lineage>
        <taxon>Eukaryota</taxon>
        <taxon>Metazoa</taxon>
        <taxon>Chordata</taxon>
        <taxon>Craniata</taxon>
        <taxon>Vertebrata</taxon>
        <taxon>Euteleostomi</taxon>
        <taxon>Mammalia</taxon>
        <taxon>Eutheria</taxon>
        <taxon>Euarchontoglires</taxon>
        <taxon>Glires</taxon>
        <taxon>Rodentia</taxon>
        <taxon>Myomorpha</taxon>
        <taxon>Muroidea</taxon>
        <taxon>Muridae</taxon>
        <taxon>Murinae</taxon>
        <taxon>Rattus</taxon>
    </lineage>
</organism>
<proteinExistence type="inferred from homology"/>
<name>HXA7_RAT</name>
<feature type="chain" id="PRO_0000200073" description="Homeobox protein Hox-A7">
    <location>
        <begin position="1" status="less than"/>
        <end position="105"/>
    </location>
</feature>
<feature type="DNA-binding region" description="Homeobox" evidence="1">
    <location>
        <begin position="5"/>
        <end position="64"/>
    </location>
</feature>
<feature type="region of interest" description="Disordered" evidence="2">
    <location>
        <begin position="62"/>
        <end position="105"/>
    </location>
</feature>
<feature type="compositionally biased region" description="Acidic residues" evidence="2">
    <location>
        <begin position="89"/>
        <end position="105"/>
    </location>
</feature>
<feature type="non-terminal residue">
    <location>
        <position position="1"/>
    </location>
</feature>
<comment type="function">
    <text>Sequence-specific transcription factor which is part of a developmental regulatory system that provides cells with specific positional identities on the anterior-posterior axis.</text>
</comment>
<comment type="subcellular location">
    <subcellularLocation>
        <location>Nucleus</location>
    </subcellularLocation>
</comment>
<comment type="similarity">
    <text evidence="3">Belongs to the Antp homeobox family.</text>
</comment>
<reference key="1">
    <citation type="journal article" date="1987" name="Gene">
        <title>Cloning and expression of rat homeo-box-containing sequences.</title>
        <authorList>
            <person name="Falzon M."/>
            <person name="Sanderson N."/>
            <person name="Chung S.Y."/>
        </authorList>
    </citation>
    <scope>NUCLEOTIDE SEQUENCE [GENOMIC DNA]</scope>
    <source>
        <strain>Sprague-Dawley</strain>
    </source>
</reference>
<accession>P09634</accession>
<dbReference type="EMBL" id="M16807">
    <property type="status" value="NOT_ANNOTATED_CDS"/>
    <property type="molecule type" value="Genomic_DNA"/>
</dbReference>
<dbReference type="PIR" id="A27471">
    <property type="entry name" value="A27471"/>
</dbReference>
<dbReference type="SMR" id="P09634"/>
<dbReference type="FunCoup" id="P09634">
    <property type="interactions" value="139"/>
</dbReference>
<dbReference type="STRING" id="10116.ENSRNOP00000065479"/>
<dbReference type="PhosphoSitePlus" id="P09634"/>
<dbReference type="PaxDb" id="10116-ENSRNOP00000065479"/>
<dbReference type="UCSC" id="RGD:1587253">
    <property type="organism name" value="rat"/>
</dbReference>
<dbReference type="AGR" id="RGD:1587253"/>
<dbReference type="RGD" id="1587253">
    <property type="gene designation" value="Hoxa7"/>
</dbReference>
<dbReference type="eggNOG" id="KOG0489">
    <property type="taxonomic scope" value="Eukaryota"/>
</dbReference>
<dbReference type="InParanoid" id="P09634"/>
<dbReference type="PhylomeDB" id="P09634"/>
<dbReference type="Proteomes" id="UP000002494">
    <property type="component" value="Unplaced"/>
</dbReference>
<dbReference type="GO" id="GO:0005634">
    <property type="term" value="C:nucleus"/>
    <property type="evidence" value="ECO:0000266"/>
    <property type="project" value="RGD"/>
</dbReference>
<dbReference type="GO" id="GO:0003677">
    <property type="term" value="F:DNA binding"/>
    <property type="evidence" value="ECO:0000266"/>
    <property type="project" value="RGD"/>
</dbReference>
<dbReference type="GO" id="GO:0001228">
    <property type="term" value="F:DNA-binding transcription activator activity, RNA polymerase II-specific"/>
    <property type="evidence" value="ECO:0000266"/>
    <property type="project" value="RGD"/>
</dbReference>
<dbReference type="GO" id="GO:0003700">
    <property type="term" value="F:DNA-binding transcription factor activity"/>
    <property type="evidence" value="ECO:0000266"/>
    <property type="project" value="RGD"/>
</dbReference>
<dbReference type="GO" id="GO:0140297">
    <property type="term" value="F:DNA-binding transcription factor binding"/>
    <property type="evidence" value="ECO:0000266"/>
    <property type="project" value="RGD"/>
</dbReference>
<dbReference type="GO" id="GO:0000978">
    <property type="term" value="F:RNA polymerase II cis-regulatory region sequence-specific DNA binding"/>
    <property type="evidence" value="ECO:0000266"/>
    <property type="project" value="RGD"/>
</dbReference>
<dbReference type="GO" id="GO:0043565">
    <property type="term" value="F:sequence-specific DNA binding"/>
    <property type="evidence" value="ECO:0000266"/>
    <property type="project" value="RGD"/>
</dbReference>
<dbReference type="GO" id="GO:1990837">
    <property type="term" value="F:sequence-specific double-stranded DNA binding"/>
    <property type="evidence" value="ECO:0000266"/>
    <property type="project" value="RGD"/>
</dbReference>
<dbReference type="GO" id="GO:0001525">
    <property type="term" value="P:angiogenesis"/>
    <property type="evidence" value="ECO:0000266"/>
    <property type="project" value="RGD"/>
</dbReference>
<dbReference type="GO" id="GO:0009952">
    <property type="term" value="P:anterior/posterior pattern specification"/>
    <property type="evidence" value="ECO:0000266"/>
    <property type="project" value="RGD"/>
</dbReference>
<dbReference type="GO" id="GO:0048704">
    <property type="term" value="P:embryonic skeletal system morphogenesis"/>
    <property type="evidence" value="ECO:0000266"/>
    <property type="project" value="RGD"/>
</dbReference>
<dbReference type="GO" id="GO:0001953">
    <property type="term" value="P:negative regulation of cell-matrix adhesion"/>
    <property type="evidence" value="ECO:0000266"/>
    <property type="project" value="RGD"/>
</dbReference>
<dbReference type="GO" id="GO:0045892">
    <property type="term" value="P:negative regulation of DNA-templated transcription"/>
    <property type="evidence" value="ECO:0000266"/>
    <property type="project" value="RGD"/>
</dbReference>
<dbReference type="GO" id="GO:0045617">
    <property type="term" value="P:negative regulation of keratinocyte differentiation"/>
    <property type="evidence" value="ECO:0000266"/>
    <property type="project" value="RGD"/>
</dbReference>
<dbReference type="GO" id="GO:0002686">
    <property type="term" value="P:negative regulation of leukocyte migration"/>
    <property type="evidence" value="ECO:0000266"/>
    <property type="project" value="RGD"/>
</dbReference>
<dbReference type="GO" id="GO:0045656">
    <property type="term" value="P:negative regulation of monocyte differentiation"/>
    <property type="evidence" value="ECO:0000266"/>
    <property type="project" value="RGD"/>
</dbReference>
<dbReference type="GO" id="GO:0000122">
    <property type="term" value="P:negative regulation of transcription by RNA polymerase II"/>
    <property type="evidence" value="ECO:0000266"/>
    <property type="project" value="RGD"/>
</dbReference>
<dbReference type="GO" id="GO:0045944">
    <property type="term" value="P:positive regulation of transcription by RNA polymerase II"/>
    <property type="evidence" value="ECO:0000266"/>
    <property type="project" value="RGD"/>
</dbReference>
<dbReference type="GO" id="GO:0048863">
    <property type="term" value="P:stem cell differentiation"/>
    <property type="evidence" value="ECO:0000266"/>
    <property type="project" value="RGD"/>
</dbReference>
<dbReference type="CDD" id="cd00086">
    <property type="entry name" value="homeodomain"/>
    <property type="match status" value="1"/>
</dbReference>
<dbReference type="FunFam" id="1.10.10.60:FF:000017">
    <property type="entry name" value="Homeobox protein antennapedia"/>
    <property type="match status" value="1"/>
</dbReference>
<dbReference type="Gene3D" id="1.10.10.60">
    <property type="entry name" value="Homeodomain-like"/>
    <property type="match status" value="1"/>
</dbReference>
<dbReference type="InterPro" id="IPR050296">
    <property type="entry name" value="Antp_homeobox"/>
</dbReference>
<dbReference type="InterPro" id="IPR001356">
    <property type="entry name" value="HD"/>
</dbReference>
<dbReference type="InterPro" id="IPR020479">
    <property type="entry name" value="HD_metazoa"/>
</dbReference>
<dbReference type="InterPro" id="IPR017970">
    <property type="entry name" value="Homeobox_CS"/>
</dbReference>
<dbReference type="InterPro" id="IPR009057">
    <property type="entry name" value="Homeodomain-like_sf"/>
</dbReference>
<dbReference type="PANTHER" id="PTHR45659">
    <property type="entry name" value="HOMEOBOX PROTEIN HOX"/>
    <property type="match status" value="1"/>
</dbReference>
<dbReference type="PANTHER" id="PTHR45659:SF12">
    <property type="entry name" value="HOMEOBOX PROTEIN HOX-A7"/>
    <property type="match status" value="1"/>
</dbReference>
<dbReference type="Pfam" id="PF00046">
    <property type="entry name" value="Homeodomain"/>
    <property type="match status" value="1"/>
</dbReference>
<dbReference type="PRINTS" id="PR00024">
    <property type="entry name" value="HOMEOBOX"/>
</dbReference>
<dbReference type="SMART" id="SM00389">
    <property type="entry name" value="HOX"/>
    <property type="match status" value="1"/>
</dbReference>
<dbReference type="SUPFAM" id="SSF46689">
    <property type="entry name" value="Homeodomain-like"/>
    <property type="match status" value="1"/>
</dbReference>
<dbReference type="PROSITE" id="PS00027">
    <property type="entry name" value="HOMEOBOX_1"/>
    <property type="match status" value="1"/>
</dbReference>
<dbReference type="PROSITE" id="PS50071">
    <property type="entry name" value="HOMEOBOX_2"/>
    <property type="match status" value="1"/>
</dbReference>
<evidence type="ECO:0000255" key="1">
    <source>
        <dbReference type="PROSITE-ProRule" id="PRU00108"/>
    </source>
</evidence>
<evidence type="ECO:0000256" key="2">
    <source>
        <dbReference type="SAM" id="MobiDB-lite"/>
    </source>
</evidence>
<evidence type="ECO:0000305" key="3"/>
<protein>
    <recommendedName>
        <fullName>Homeobox protein Hox-A7</fullName>
    </recommendedName>
    <alternativeName>
        <fullName>Homeobox protein Hox-1.1</fullName>
    </alternativeName>
    <alternativeName>
        <fullName>Homeobox protein R5</fullName>
    </alternativeName>
</protein>